<name>NUOK_SODGM</name>
<organism>
    <name type="scientific">Sodalis glossinidius (strain morsitans)</name>
    <dbReference type="NCBI Taxonomy" id="343509"/>
    <lineage>
        <taxon>Bacteria</taxon>
        <taxon>Pseudomonadati</taxon>
        <taxon>Pseudomonadota</taxon>
        <taxon>Gammaproteobacteria</taxon>
        <taxon>Enterobacterales</taxon>
        <taxon>Bruguierivoracaceae</taxon>
        <taxon>Sodalis</taxon>
    </lineage>
</organism>
<keyword id="KW-0997">Cell inner membrane</keyword>
<keyword id="KW-1003">Cell membrane</keyword>
<keyword id="KW-0472">Membrane</keyword>
<keyword id="KW-0520">NAD</keyword>
<keyword id="KW-0874">Quinone</keyword>
<keyword id="KW-1278">Translocase</keyword>
<keyword id="KW-0812">Transmembrane</keyword>
<keyword id="KW-1133">Transmembrane helix</keyword>
<keyword id="KW-0813">Transport</keyword>
<keyword id="KW-0830">Ubiquinone</keyword>
<accession>Q2NSK8</accession>
<comment type="function">
    <text evidence="1">NDH-1 shuttles electrons from NADH, via FMN and iron-sulfur (Fe-S) centers, to quinones in the respiratory chain. The immediate electron acceptor for the enzyme in this species is believed to be ubiquinone. Couples the redox reaction to proton translocation (for every two electrons transferred, four hydrogen ions are translocated across the cytoplasmic membrane), and thus conserves the redox energy in a proton gradient.</text>
</comment>
<comment type="catalytic activity">
    <reaction evidence="1">
        <text>a quinone + NADH + 5 H(+)(in) = a quinol + NAD(+) + 4 H(+)(out)</text>
        <dbReference type="Rhea" id="RHEA:57888"/>
        <dbReference type="ChEBI" id="CHEBI:15378"/>
        <dbReference type="ChEBI" id="CHEBI:24646"/>
        <dbReference type="ChEBI" id="CHEBI:57540"/>
        <dbReference type="ChEBI" id="CHEBI:57945"/>
        <dbReference type="ChEBI" id="CHEBI:132124"/>
    </reaction>
</comment>
<comment type="subunit">
    <text evidence="1">NDH-1 is composed of 13 different subunits. Subunits NuoA, H, J, K, L, M, N constitute the membrane sector of the complex.</text>
</comment>
<comment type="subcellular location">
    <subcellularLocation>
        <location evidence="1">Cell inner membrane</location>
        <topology evidence="1">Multi-pass membrane protein</topology>
    </subcellularLocation>
</comment>
<comment type="similarity">
    <text evidence="1">Belongs to the complex I subunit 4L family.</text>
</comment>
<evidence type="ECO:0000255" key="1">
    <source>
        <dbReference type="HAMAP-Rule" id="MF_01456"/>
    </source>
</evidence>
<dbReference type="EC" id="7.1.1.-" evidence="1"/>
<dbReference type="EMBL" id="AP008232">
    <property type="protein sequence ID" value="BAE74867.1"/>
    <property type="molecule type" value="Genomic_DNA"/>
</dbReference>
<dbReference type="RefSeq" id="WP_011411412.1">
    <property type="nucleotide sequence ID" value="NC_007712.1"/>
</dbReference>
<dbReference type="SMR" id="Q2NSK8"/>
<dbReference type="STRING" id="343509.SG1592"/>
<dbReference type="KEGG" id="sgl:SG1592"/>
<dbReference type="eggNOG" id="COG0713">
    <property type="taxonomic scope" value="Bacteria"/>
</dbReference>
<dbReference type="HOGENOM" id="CLU_144724_0_1_6"/>
<dbReference type="OrthoDB" id="9801357at2"/>
<dbReference type="BioCyc" id="SGLO343509:SGP1_RS14500-MONOMER"/>
<dbReference type="Proteomes" id="UP000001932">
    <property type="component" value="Chromosome"/>
</dbReference>
<dbReference type="GO" id="GO:0030964">
    <property type="term" value="C:NADH dehydrogenase complex"/>
    <property type="evidence" value="ECO:0007669"/>
    <property type="project" value="TreeGrafter"/>
</dbReference>
<dbReference type="GO" id="GO:0005886">
    <property type="term" value="C:plasma membrane"/>
    <property type="evidence" value="ECO:0007669"/>
    <property type="project" value="UniProtKB-SubCell"/>
</dbReference>
<dbReference type="GO" id="GO:0050136">
    <property type="term" value="F:NADH:ubiquinone reductase (non-electrogenic) activity"/>
    <property type="evidence" value="ECO:0007669"/>
    <property type="project" value="UniProtKB-UniRule"/>
</dbReference>
<dbReference type="GO" id="GO:0048038">
    <property type="term" value="F:quinone binding"/>
    <property type="evidence" value="ECO:0007669"/>
    <property type="project" value="UniProtKB-KW"/>
</dbReference>
<dbReference type="GO" id="GO:0042773">
    <property type="term" value="P:ATP synthesis coupled electron transport"/>
    <property type="evidence" value="ECO:0007669"/>
    <property type="project" value="InterPro"/>
</dbReference>
<dbReference type="FunFam" id="1.10.287.3510:FF:000001">
    <property type="entry name" value="NADH-quinone oxidoreductase subunit K"/>
    <property type="match status" value="1"/>
</dbReference>
<dbReference type="Gene3D" id="1.10.287.3510">
    <property type="match status" value="1"/>
</dbReference>
<dbReference type="HAMAP" id="MF_01456">
    <property type="entry name" value="NDH1_NuoK"/>
    <property type="match status" value="1"/>
</dbReference>
<dbReference type="InterPro" id="IPR001133">
    <property type="entry name" value="NADH_UbQ_OxRdtase_chain4L/K"/>
</dbReference>
<dbReference type="InterPro" id="IPR039428">
    <property type="entry name" value="NUOK/Mnh_C1-like"/>
</dbReference>
<dbReference type="NCBIfam" id="NF004319">
    <property type="entry name" value="PRK05715.1-1"/>
    <property type="match status" value="1"/>
</dbReference>
<dbReference type="NCBIfam" id="NF004320">
    <property type="entry name" value="PRK05715.1-2"/>
    <property type="match status" value="1"/>
</dbReference>
<dbReference type="PANTHER" id="PTHR11434:SF16">
    <property type="entry name" value="NADH-UBIQUINONE OXIDOREDUCTASE CHAIN 4L"/>
    <property type="match status" value="1"/>
</dbReference>
<dbReference type="PANTHER" id="PTHR11434">
    <property type="entry name" value="NADH-UBIQUINONE OXIDOREDUCTASE SUBUNIT ND4L"/>
    <property type="match status" value="1"/>
</dbReference>
<dbReference type="Pfam" id="PF00420">
    <property type="entry name" value="Oxidored_q2"/>
    <property type="match status" value="1"/>
</dbReference>
<gene>
    <name evidence="1" type="primary">nuoK</name>
    <name type="ordered locus">SG1592</name>
</gene>
<sequence>MIPLSHGLILAAILFVLGLTGMIIRRNLLFMLLGLEIMINASALAFVVAGSYWGHADGQVMYILAVTLAAAEASIGLALLLQLHRRRRTLDIDSVSEMHG</sequence>
<proteinExistence type="inferred from homology"/>
<feature type="chain" id="PRO_0000390244" description="NADH-quinone oxidoreductase subunit K">
    <location>
        <begin position="1"/>
        <end position="100"/>
    </location>
</feature>
<feature type="transmembrane region" description="Helical" evidence="1">
    <location>
        <begin position="4"/>
        <end position="24"/>
    </location>
</feature>
<feature type="transmembrane region" description="Helical" evidence="1">
    <location>
        <begin position="28"/>
        <end position="48"/>
    </location>
</feature>
<feature type="transmembrane region" description="Helical" evidence="1">
    <location>
        <begin position="60"/>
        <end position="80"/>
    </location>
</feature>
<reference key="1">
    <citation type="journal article" date="2006" name="Genome Res.">
        <title>Massive genome erosion and functional adaptations provide insights into the symbiotic lifestyle of Sodalis glossinidius in the tsetse host.</title>
        <authorList>
            <person name="Toh H."/>
            <person name="Weiss B.L."/>
            <person name="Perkin S.A.H."/>
            <person name="Yamashita A."/>
            <person name="Oshima K."/>
            <person name="Hattori M."/>
            <person name="Aksoy S."/>
        </authorList>
    </citation>
    <scope>NUCLEOTIDE SEQUENCE [LARGE SCALE GENOMIC DNA]</scope>
    <source>
        <strain>morsitans</strain>
    </source>
</reference>
<protein>
    <recommendedName>
        <fullName evidence="1">NADH-quinone oxidoreductase subunit K</fullName>
        <ecNumber evidence="1">7.1.1.-</ecNumber>
    </recommendedName>
    <alternativeName>
        <fullName evidence="1">NADH dehydrogenase I subunit K</fullName>
    </alternativeName>
    <alternativeName>
        <fullName evidence="1">NDH-1 subunit K</fullName>
    </alternativeName>
</protein>